<organism>
    <name type="scientific">Yersinia pseudotuberculosis serotype I (strain IP32953)</name>
    <dbReference type="NCBI Taxonomy" id="273123"/>
    <lineage>
        <taxon>Bacteria</taxon>
        <taxon>Pseudomonadati</taxon>
        <taxon>Pseudomonadota</taxon>
        <taxon>Gammaproteobacteria</taxon>
        <taxon>Enterobacterales</taxon>
        <taxon>Yersiniaceae</taxon>
        <taxon>Yersinia</taxon>
    </lineage>
</organism>
<dbReference type="EC" id="3.6.4.-" evidence="1"/>
<dbReference type="EMBL" id="BX936398">
    <property type="protein sequence ID" value="CAH19898.1"/>
    <property type="molecule type" value="Genomic_DNA"/>
</dbReference>
<dbReference type="RefSeq" id="WP_011191719.1">
    <property type="nucleotide sequence ID" value="NC_006155.1"/>
</dbReference>
<dbReference type="SMR" id="Q66EN4"/>
<dbReference type="GeneID" id="49787339"/>
<dbReference type="KEGG" id="ypo:BZ17_1899"/>
<dbReference type="KEGG" id="yps:YPTB0658"/>
<dbReference type="PATRIC" id="fig|273123.14.peg.2018"/>
<dbReference type="Proteomes" id="UP000001011">
    <property type="component" value="Chromosome"/>
</dbReference>
<dbReference type="GO" id="GO:0005524">
    <property type="term" value="F:ATP binding"/>
    <property type="evidence" value="ECO:0007669"/>
    <property type="project" value="UniProtKB-UniRule"/>
</dbReference>
<dbReference type="GO" id="GO:0003677">
    <property type="term" value="F:DNA binding"/>
    <property type="evidence" value="ECO:0007669"/>
    <property type="project" value="UniProtKB-KW"/>
</dbReference>
<dbReference type="GO" id="GO:0004386">
    <property type="term" value="F:helicase activity"/>
    <property type="evidence" value="ECO:0007669"/>
    <property type="project" value="UniProtKB-UniRule"/>
</dbReference>
<dbReference type="GO" id="GO:0016817">
    <property type="term" value="F:hydrolase activity, acting on acid anhydrides"/>
    <property type="evidence" value="ECO:0007669"/>
    <property type="project" value="InterPro"/>
</dbReference>
<dbReference type="GO" id="GO:0006355">
    <property type="term" value="P:regulation of DNA-templated transcription"/>
    <property type="evidence" value="ECO:0007669"/>
    <property type="project" value="UniProtKB-UniRule"/>
</dbReference>
<dbReference type="CDD" id="cd18011">
    <property type="entry name" value="DEXDc_RapA"/>
    <property type="match status" value="1"/>
</dbReference>
<dbReference type="CDD" id="cd18793">
    <property type="entry name" value="SF2_C_SNF"/>
    <property type="match status" value="1"/>
</dbReference>
<dbReference type="FunFam" id="3.40.50.10810:FF:000012">
    <property type="entry name" value="RNA polymerase-associated protein RapA"/>
    <property type="match status" value="1"/>
</dbReference>
<dbReference type="Gene3D" id="2.30.30.140">
    <property type="match status" value="1"/>
</dbReference>
<dbReference type="Gene3D" id="2.30.30.930">
    <property type="match status" value="1"/>
</dbReference>
<dbReference type="Gene3D" id="3.30.360.80">
    <property type="match status" value="1"/>
</dbReference>
<dbReference type="Gene3D" id="6.10.140.1500">
    <property type="match status" value="1"/>
</dbReference>
<dbReference type="Gene3D" id="6.10.140.2230">
    <property type="match status" value="1"/>
</dbReference>
<dbReference type="Gene3D" id="3.40.50.300">
    <property type="entry name" value="P-loop containing nucleotide triphosphate hydrolases"/>
    <property type="match status" value="1"/>
</dbReference>
<dbReference type="Gene3D" id="3.40.50.10810">
    <property type="entry name" value="Tandem AAA-ATPase domain"/>
    <property type="match status" value="1"/>
</dbReference>
<dbReference type="HAMAP" id="MF_01821">
    <property type="entry name" value="Helicase_RapA"/>
    <property type="match status" value="1"/>
</dbReference>
<dbReference type="InterPro" id="IPR014001">
    <property type="entry name" value="Helicase_ATP-bd"/>
</dbReference>
<dbReference type="InterPro" id="IPR001650">
    <property type="entry name" value="Helicase_C-like"/>
</dbReference>
<dbReference type="InterPro" id="IPR023949">
    <property type="entry name" value="Helicase_RapA"/>
</dbReference>
<dbReference type="InterPro" id="IPR027417">
    <property type="entry name" value="P-loop_NTPase"/>
</dbReference>
<dbReference type="InterPro" id="IPR022737">
    <property type="entry name" value="RapA_C"/>
</dbReference>
<dbReference type="InterPro" id="IPR038718">
    <property type="entry name" value="SNF2-like_sf"/>
</dbReference>
<dbReference type="InterPro" id="IPR049730">
    <property type="entry name" value="SNF2/RAD54-like_C"/>
</dbReference>
<dbReference type="InterPro" id="IPR000330">
    <property type="entry name" value="SNF2_N"/>
</dbReference>
<dbReference type="InterPro" id="IPR040765">
    <property type="entry name" value="Tudor_1_RapA"/>
</dbReference>
<dbReference type="InterPro" id="IPR040766">
    <property type="entry name" value="Tudor_2_RapA"/>
</dbReference>
<dbReference type="NCBIfam" id="NF003426">
    <property type="entry name" value="PRK04914.1"/>
    <property type="match status" value="1"/>
</dbReference>
<dbReference type="PANTHER" id="PTHR45766">
    <property type="entry name" value="DNA ANNEALING HELICASE AND ENDONUCLEASE ZRANB3 FAMILY MEMBER"/>
    <property type="match status" value="1"/>
</dbReference>
<dbReference type="PANTHER" id="PTHR45766:SF6">
    <property type="entry name" value="SWI_SNF-RELATED MATRIX-ASSOCIATED ACTIN-DEPENDENT REGULATOR OF CHROMATIN SUBFAMILY A-LIKE PROTEIN 1"/>
    <property type="match status" value="1"/>
</dbReference>
<dbReference type="Pfam" id="PF00271">
    <property type="entry name" value="Helicase_C"/>
    <property type="match status" value="1"/>
</dbReference>
<dbReference type="Pfam" id="PF12137">
    <property type="entry name" value="RapA_C"/>
    <property type="match status" value="1"/>
</dbReference>
<dbReference type="Pfam" id="PF00176">
    <property type="entry name" value="SNF2-rel_dom"/>
    <property type="match status" value="1"/>
</dbReference>
<dbReference type="Pfam" id="PF18339">
    <property type="entry name" value="Tudor_1_RapA"/>
    <property type="match status" value="1"/>
</dbReference>
<dbReference type="Pfam" id="PF18337">
    <property type="entry name" value="Tudor_RapA"/>
    <property type="match status" value="1"/>
</dbReference>
<dbReference type="SMART" id="SM00487">
    <property type="entry name" value="DEXDc"/>
    <property type="match status" value="1"/>
</dbReference>
<dbReference type="SMART" id="SM00490">
    <property type="entry name" value="HELICc"/>
    <property type="match status" value="1"/>
</dbReference>
<dbReference type="SUPFAM" id="SSF52540">
    <property type="entry name" value="P-loop containing nucleoside triphosphate hydrolases"/>
    <property type="match status" value="2"/>
</dbReference>
<dbReference type="PROSITE" id="PS51192">
    <property type="entry name" value="HELICASE_ATP_BIND_1"/>
    <property type="match status" value="1"/>
</dbReference>
<dbReference type="PROSITE" id="PS51194">
    <property type="entry name" value="HELICASE_CTER"/>
    <property type="match status" value="1"/>
</dbReference>
<protein>
    <recommendedName>
        <fullName evidence="1">RNA polymerase-associated protein RapA</fullName>
        <ecNumber evidence="1">3.6.4.-</ecNumber>
    </recommendedName>
    <alternativeName>
        <fullName evidence="1">ATP-dependent helicase HepA</fullName>
    </alternativeName>
</protein>
<comment type="function">
    <text evidence="1">Transcription regulator that activates transcription by stimulating RNA polymerase (RNAP) recycling in case of stress conditions such as supercoiled DNA or high salt concentrations. Probably acts by releasing the RNAP, when it is trapped or immobilized on tightly supercoiled DNA. Does not activate transcription on linear DNA. Probably not involved in DNA repair.</text>
</comment>
<comment type="subunit">
    <text evidence="1">Interacts with the RNAP. Has a higher affinity for the core RNAP than for the holoenzyme. Its ATPase activity is stimulated by binding to RNAP.</text>
</comment>
<comment type="similarity">
    <text evidence="1">Belongs to the SNF2/RAD54 helicase family. RapA subfamily.</text>
</comment>
<feature type="chain" id="PRO_0000207193" description="RNA polymerase-associated protein RapA">
    <location>
        <begin position="1"/>
        <end position="968"/>
    </location>
</feature>
<feature type="domain" description="Helicase ATP-binding" evidence="1">
    <location>
        <begin position="164"/>
        <end position="334"/>
    </location>
</feature>
<feature type="domain" description="Helicase C-terminal" evidence="1">
    <location>
        <begin position="490"/>
        <end position="644"/>
    </location>
</feature>
<feature type="short sequence motif" description="DEAH box">
    <location>
        <begin position="280"/>
        <end position="283"/>
    </location>
</feature>
<feature type="binding site" evidence="1">
    <location>
        <begin position="177"/>
        <end position="184"/>
    </location>
    <ligand>
        <name>ATP</name>
        <dbReference type="ChEBI" id="CHEBI:30616"/>
    </ligand>
</feature>
<gene>
    <name evidence="1" type="primary">rapA</name>
    <name type="synonym">hepA</name>
    <name type="ordered locus">YPTB0658</name>
</gene>
<accession>Q66EN4</accession>
<reference key="1">
    <citation type="journal article" date="2004" name="Proc. Natl. Acad. Sci. U.S.A.">
        <title>Insights into the evolution of Yersinia pestis through whole-genome comparison with Yersinia pseudotuberculosis.</title>
        <authorList>
            <person name="Chain P.S.G."/>
            <person name="Carniel E."/>
            <person name="Larimer F.W."/>
            <person name="Lamerdin J."/>
            <person name="Stoutland P.O."/>
            <person name="Regala W.M."/>
            <person name="Georgescu A.M."/>
            <person name="Vergez L.M."/>
            <person name="Land M.L."/>
            <person name="Motin V.L."/>
            <person name="Brubaker R.R."/>
            <person name="Fowler J."/>
            <person name="Hinnebusch J."/>
            <person name="Marceau M."/>
            <person name="Medigue C."/>
            <person name="Simonet M."/>
            <person name="Chenal-Francisque V."/>
            <person name="Souza B."/>
            <person name="Dacheux D."/>
            <person name="Elliott J.M."/>
            <person name="Derbise A."/>
            <person name="Hauser L.J."/>
            <person name="Garcia E."/>
        </authorList>
    </citation>
    <scope>NUCLEOTIDE SEQUENCE [LARGE SCALE GENOMIC DNA]</scope>
    <source>
        <strain>IP32953</strain>
    </source>
</reference>
<sequence>MPFTLGQRWISDTESELGLGTVVAIDVRMITLLFPATGENRLYARNDSPITRVMFNPSDTITHHEGWQLKVEEVTQENGLITYIGTRLDTEETGVAMREVLLDSKLTFSKPQDRLFAGQIDRMDRFALRFRARKYQSEQFRLPWSGLRGIRASLIPHQLHIAYEVGQRHAPRVLLADEVGLGKTIEAGMIIHQQLLAGRAERVLIVVPESLQHQWLVEMLRRFNLRFSLFDDSRYSEALLDSSNPFDTEQMVICSLDFVRRNKQRLEQLADASWDLLVVDEAHHLAWSEEAPSREYQVIEQLAEHIPGVLLLTATPEQLGQQSHFARLRLLDPDRFHDYEEFVNEQQKYRPIADAVTLLLGGERLTDDKLNLLGELIDEQDIEPLLKAANSQSEDSEAARQELVTMLMDRHGTSRVLFRNTRNGVKGFPHRVLHQIKLPLPTQYQTAIKVSGIMGAKKTLDARAKDMLYPEQIYQEFEGENATWWNFDPRVEWLLNYLVANRGEKVLVICAQAATALQLEQVLREREAIRAAVFHEGLSLIERDRAAAYFASEEDGAQVLLCSEIGSEGRNFQFACQLVMFDLPFNPDLLEQRIGRLDRIGQNREIQIMVPYLEDTAQAILVRWYHEGLDAFEHTCPTGRTIYDSSYQELISYLATPSEQEGLDEFIHTCRQQHEGLKLQLEQGRDRLLEMHSNGGEHGQELAQSIAEQDNDINLVSFALNLFDIVGINQEDRSDNLIVLTPSDHMLVPDFPGLPPDGCTVTFDREQALSREDAQFVSWEHPIIRNGLDLILSGDTGSCAVSLLKNKALPVGTLLAELVYVVEAQAPKHLQLTRFLPPTPVRMLMDRNGTNLAAQVEFESFNRQLNAVNRHTSSKLVNAVQQEVHTMLQQAEALVEAQAQALIETAKREADDKLSTELARLEALKAVNPNIRDDEIEALEHNRKMVLENLNQAGWRLDAIRLVVVTHQ</sequence>
<proteinExistence type="inferred from homology"/>
<name>RAPA_YERPS</name>
<keyword id="KW-0010">Activator</keyword>
<keyword id="KW-0067">ATP-binding</keyword>
<keyword id="KW-0238">DNA-binding</keyword>
<keyword id="KW-0347">Helicase</keyword>
<keyword id="KW-0378">Hydrolase</keyword>
<keyword id="KW-0547">Nucleotide-binding</keyword>
<keyword id="KW-0804">Transcription</keyword>
<keyword id="KW-0805">Transcription regulation</keyword>
<evidence type="ECO:0000255" key="1">
    <source>
        <dbReference type="HAMAP-Rule" id="MF_01821"/>
    </source>
</evidence>